<keyword id="KW-0002">3D-structure</keyword>
<keyword id="KW-0134">Cell wall</keyword>
<keyword id="KW-1015">Disulfide bond</keyword>
<keyword id="KW-0325">Glycoprotein</keyword>
<keyword id="KW-0378">Hydrolase</keyword>
<keyword id="KW-0442">Lipid degradation</keyword>
<keyword id="KW-0443">Lipid metabolism</keyword>
<keyword id="KW-0479">Metal-binding</keyword>
<keyword id="KW-1185">Reference proteome</keyword>
<keyword id="KW-0964">Secreted</keyword>
<keyword id="KW-0732">Signal</keyword>
<keyword id="KW-0843">Virulence</keyword>
<name>MDL2_MALGO</name>
<reference key="1">
    <citation type="journal article" date="2007" name="Proc. Natl. Acad. Sci. U.S.A.">
        <title>Dandruff-associated Malassezia genomes reveal convergent and divergent virulence traits shared with plant and human fungal pathogens.</title>
        <authorList>
            <person name="Xu J."/>
            <person name="Saunders C.W."/>
            <person name="Hu P."/>
            <person name="Grant R.A."/>
            <person name="Boekhout T."/>
            <person name="Kuramae E.E."/>
            <person name="Kronstad J.W."/>
            <person name="DeAngelis Y.M."/>
            <person name="Reeder N.L."/>
            <person name="Johnstone K.R."/>
            <person name="Leland M."/>
            <person name="Fieno A.M."/>
            <person name="Begley W.M."/>
            <person name="Sun Y."/>
            <person name="Lacey M.P."/>
            <person name="Chaudhary T."/>
            <person name="Keough T."/>
            <person name="Chu L."/>
            <person name="Sears R."/>
            <person name="Yuan B."/>
            <person name="Dawson T.L. Jr."/>
        </authorList>
    </citation>
    <scope>NUCLEOTIDE SEQUENCE [LARGE SCALE GENOMIC DNA]</scope>
    <scope>IDENTIFICATION</scope>
    <scope>FUNCTION</scope>
    <scope>SUBCELLULAR LOCATION</scope>
    <source>
        <strain>ATCC MYA-4612 / CBS 7966</strain>
    </source>
</reference>
<reference key="2">
    <citation type="journal article" date="2015" name="Int. J. Mol. Sci.">
        <title>Biochemical properties and structure analysis of a DAG-Like lipase from Malassezia globosa.</title>
        <authorList>
            <person name="Xu H."/>
            <person name="Lan D."/>
            <person name="Yang B."/>
            <person name="Wang Y."/>
        </authorList>
    </citation>
    <scope>FUNCTION</scope>
    <scope>CATALYTIC ACTIVITY</scope>
</reference>
<reference key="3">
    <citation type="journal article" date="2016" name="Microbiology">
        <title>Secreted lipases from Malassezia globosa: recombinant expression and determination of their substrate specificities.</title>
        <authorList>
            <person name="Sommer B."/>
            <person name="Overy D.P."/>
            <person name="Haltli B."/>
            <person name="Kerr R.G."/>
        </authorList>
    </citation>
    <scope>FUNCTION</scope>
    <scope>CATALYTIC ACTIVITY</scope>
    <scope>SUBSTRATE SPECIFICITY</scope>
</reference>
<reference evidence="12" key="4">
    <citation type="journal article" date="2017" name="Biochem. Biophys. Res. Commun.">
        <title>Malassezia globosa MgMDL2 lipase: Crystal structure and rational modification of substrate specificity.</title>
        <authorList>
            <person name="Lan D."/>
            <person name="Xu H."/>
            <person name="Xu J."/>
            <person name="Dubin G."/>
            <person name="Liu J."/>
            <person name="Iqbal Khan F."/>
            <person name="Wang Y."/>
        </authorList>
    </citation>
    <scope>X-RAY CRYSTALLOGRAPHY (2.00 ANGSTROMS) OF 19-304</scope>
    <scope>DISULFIDE BONDS</scope>
    <scope>FUNCTION</scope>
    <scope>CATALYTIC ACTIVITY</scope>
    <scope>SUBSTRATE SPECIFICITY</scope>
    <scope>BIOPHYSICOCHEMICAL PROPERTIES</scope>
    <scope>DOMAIN</scope>
    <scope>MUTAGENESIS OF PHE-278 AND GLU-282</scope>
</reference>
<sequence length="304" mass="33653">MILGRTISLFLGCSALVSGALIEHHAASSTDQPVDVPYNLDMFSQAAVLAQETYCGEQAHDYGLKLGDATLLWTAGDGNVRQRVNLYQSDSLGIAVAIQGTNTSSLRSDLHDAQLRPVDPDSRYRRFLPQGTKVMNGFQKGYTDLVDDIFDHVKKFKQEKNESRVTVIGHSLGAAIGLLASLDINLRLEDGLFKSYLFGLPRVGNPIFANFVDRKIGDKLHWVVNGRDWVPTVPPRALGYQHPSNYVWIYPANSTNWKLYPGQENVHGMLTVAREFNFDDHEGIYFHTQIGASLGKCPAVLGGY</sequence>
<gene>
    <name evidence="9" type="primary">MDL2</name>
    <name type="ORF">MGL_0799</name>
</gene>
<accession>A8PUY5</accession>
<comment type="function">
    <text evidence="5 7 8">Secreted lipase involved in Dandruff and seborrheic dermatitis (D/SD) probably via lipase-mediated breakdown of sebaceous lipids and release of irritating free fatty acids (PubMed:18000048, PubMed:28433636). Shows activity against monoglyceride and diglyceride substrates, but not triglyceride substrates and does not exhibit regio-selective production of diacylglycerols (PubMed:27130210, PubMed:28433636). Hydrolyzes both 1,2- and 1,3-diacylglycerols (PubMed:27130210). Also hydrolyzes distearin, dilinolein and dipalmitolein (PubMed:27130210). Cleaves oleic acid from 1,2 isomers of diolein on both the 1 and the 2 position of the glycerol backbone, resulting mainly in free fatty acids but no monoolein is detected (PubMed:27130210). Shows activity on monoolein and liberates mostly free fatty acids, but can also perform the reverse reaction and produce diolein (PubMed:27130210).</text>
</comment>
<comment type="catalytic activity">
    <reaction evidence="8">
        <text>a monoacylglycerol + H2O = glycerol + a fatty acid + H(+)</text>
        <dbReference type="Rhea" id="RHEA:15245"/>
        <dbReference type="ChEBI" id="CHEBI:15377"/>
        <dbReference type="ChEBI" id="CHEBI:15378"/>
        <dbReference type="ChEBI" id="CHEBI:17408"/>
        <dbReference type="ChEBI" id="CHEBI:17754"/>
        <dbReference type="ChEBI" id="CHEBI:28868"/>
    </reaction>
</comment>
<comment type="catalytic activity">
    <reaction evidence="8">
        <text>a diacylglycerol + H2O = a monoacylglycerol + a fatty acid + H(+)</text>
        <dbReference type="Rhea" id="RHEA:32731"/>
        <dbReference type="ChEBI" id="CHEBI:15377"/>
        <dbReference type="ChEBI" id="CHEBI:15378"/>
        <dbReference type="ChEBI" id="CHEBI:17408"/>
        <dbReference type="ChEBI" id="CHEBI:18035"/>
        <dbReference type="ChEBI" id="CHEBI:28868"/>
    </reaction>
</comment>
<comment type="biophysicochemical properties">
    <phDependence>
        <text evidence="8">Optimum pH is 6,0.</text>
    </phDependence>
    <temperatureDependence>
        <text evidence="8">Optimum temperature is 15 degrees Celsius.</text>
    </temperatureDependence>
</comment>
<comment type="subcellular location">
    <subcellularLocation>
        <location evidence="5">Secreted</location>
    </subcellularLocation>
    <subcellularLocation>
        <location evidence="5">Secreted</location>
        <location evidence="5">Cell wall</location>
    </subcellularLocation>
</comment>
<comment type="domain">
    <text evidence="8">Phe-229 and Glu-282, both localized near active sites, are more bulky and may act as steric hindrances for triacylglycerol binding.</text>
</comment>
<comment type="similarity">
    <text evidence="11">Belongs to the AB hydrolase superfamily. Lipase family. Class 3 subfamily.</text>
</comment>
<evidence type="ECO:0000250" key="1">
    <source>
        <dbReference type="UniProtKB" id="A8PUY1"/>
    </source>
</evidence>
<evidence type="ECO:0000255" key="2"/>
<evidence type="ECO:0000255" key="3">
    <source>
        <dbReference type="PROSITE-ProRule" id="PRU00498"/>
    </source>
</evidence>
<evidence type="ECO:0000255" key="4">
    <source>
        <dbReference type="PROSITE-ProRule" id="PRU10037"/>
    </source>
</evidence>
<evidence type="ECO:0000269" key="5">
    <source>
    </source>
</evidence>
<evidence type="ECO:0000269" key="6">
    <source>
    </source>
</evidence>
<evidence type="ECO:0000269" key="7">
    <source>
    </source>
</evidence>
<evidence type="ECO:0000269" key="8">
    <source>
    </source>
</evidence>
<evidence type="ECO:0000303" key="9">
    <source>
    </source>
</evidence>
<evidence type="ECO:0000303" key="10">
    <source>
    </source>
</evidence>
<evidence type="ECO:0000305" key="11"/>
<evidence type="ECO:0007744" key="12">
    <source>
        <dbReference type="PDB" id="5GW8"/>
    </source>
</evidence>
<evidence type="ECO:0007829" key="13">
    <source>
        <dbReference type="PDB" id="5GW8"/>
    </source>
</evidence>
<organism>
    <name type="scientific">Malassezia globosa (strain ATCC MYA-4612 / CBS 7966)</name>
    <name type="common">Dandruff-associated fungus</name>
    <dbReference type="NCBI Taxonomy" id="425265"/>
    <lineage>
        <taxon>Eukaryota</taxon>
        <taxon>Fungi</taxon>
        <taxon>Dikarya</taxon>
        <taxon>Basidiomycota</taxon>
        <taxon>Ustilaginomycotina</taxon>
        <taxon>Malasseziomycetes</taxon>
        <taxon>Malasseziales</taxon>
        <taxon>Malasseziaceae</taxon>
        <taxon>Malassezia</taxon>
    </lineage>
</organism>
<feature type="signal peptide" evidence="2">
    <location>
        <begin position="1"/>
        <end position="19"/>
    </location>
</feature>
<feature type="chain" id="PRO_5002725356" description="Secreted mono- and diacylglycerol lipase MDL2">
    <location>
        <begin position="20"/>
        <end position="304"/>
    </location>
</feature>
<feature type="active site" description="Nucleophile" evidence="4">
    <location>
        <position position="171"/>
    </location>
</feature>
<feature type="active site" evidence="1">
    <location>
        <position position="228"/>
    </location>
</feature>
<feature type="active site" evidence="1">
    <location>
        <position position="281"/>
    </location>
</feature>
<feature type="glycosylation site" description="N-linked (GlcNAc...) asparagine" evidence="3">
    <location>
        <position position="102"/>
    </location>
</feature>
<feature type="glycosylation site" description="N-linked (GlcNAc...) asparagine" evidence="3">
    <location>
        <position position="161"/>
    </location>
</feature>
<feature type="glycosylation site" description="N-linked (GlcNAc...) asparagine" evidence="3">
    <location>
        <position position="253"/>
    </location>
</feature>
<feature type="disulfide bond" evidence="8 12">
    <location>
        <begin position="55"/>
        <end position="297"/>
    </location>
</feature>
<feature type="mutagenesis site" description="Leads to the ability to hydrolyze triacylglycerol (TAG). Also acquires ability to synthesize TAGs by esterification of glycerol and fatty acids." evidence="10">
    <original>F</original>
    <variation>A</variation>
    <location>
        <position position="278"/>
    </location>
</feature>
<feature type="mutagenesis site" description="Leads to the ability to hydrolyze triacylglycerol (TAG). Also acquires ability to synthesize TAGs by esterification of glycerol and fatty acids." evidence="10">
    <original>E</original>
    <variation>A</variation>
    <location>
        <position position="282"/>
    </location>
</feature>
<feature type="helix" evidence="13">
    <location>
        <begin position="40"/>
        <end position="52"/>
    </location>
</feature>
<feature type="turn" evidence="13">
    <location>
        <begin position="57"/>
        <end position="60"/>
    </location>
</feature>
<feature type="strand" evidence="13">
    <location>
        <begin position="69"/>
        <end position="75"/>
    </location>
</feature>
<feature type="strand" evidence="13">
    <location>
        <begin position="78"/>
        <end position="81"/>
    </location>
</feature>
<feature type="strand" evidence="13">
    <location>
        <begin position="84"/>
        <end position="89"/>
    </location>
</feature>
<feature type="turn" evidence="13">
    <location>
        <begin position="90"/>
        <end position="92"/>
    </location>
</feature>
<feature type="strand" evidence="13">
    <location>
        <begin position="93"/>
        <end position="98"/>
    </location>
</feature>
<feature type="helix" evidence="13">
    <location>
        <begin position="103"/>
        <end position="109"/>
    </location>
</feature>
<feature type="helix" evidence="13">
    <location>
        <begin position="112"/>
        <end position="115"/>
    </location>
</feature>
<feature type="turn" evidence="13">
    <location>
        <begin position="122"/>
        <end position="124"/>
    </location>
</feature>
<feature type="helix" evidence="13">
    <location>
        <begin position="125"/>
        <end position="127"/>
    </location>
</feature>
<feature type="helix" evidence="13">
    <location>
        <begin position="136"/>
        <end position="143"/>
    </location>
</feature>
<feature type="helix" evidence="13">
    <location>
        <begin position="146"/>
        <end position="159"/>
    </location>
</feature>
<feature type="strand" evidence="13">
    <location>
        <begin position="165"/>
        <end position="170"/>
    </location>
</feature>
<feature type="helix" evidence="13">
    <location>
        <begin position="172"/>
        <end position="187"/>
    </location>
</feature>
<feature type="strand" evidence="13">
    <location>
        <begin position="193"/>
        <end position="199"/>
    </location>
</feature>
<feature type="helix" evidence="13">
    <location>
        <begin position="206"/>
        <end position="216"/>
    </location>
</feature>
<feature type="turn" evidence="13">
    <location>
        <begin position="217"/>
        <end position="219"/>
    </location>
</feature>
<feature type="strand" evidence="13">
    <location>
        <begin position="220"/>
        <end position="225"/>
    </location>
</feature>
<feature type="helix" evidence="13">
    <location>
        <begin position="230"/>
        <end position="232"/>
    </location>
</feature>
<feature type="helix" evidence="13">
    <location>
        <begin position="236"/>
        <end position="238"/>
    </location>
</feature>
<feature type="strand" evidence="13">
    <location>
        <begin position="246"/>
        <end position="251"/>
    </location>
</feature>
<feature type="strand" evidence="13">
    <location>
        <begin position="257"/>
        <end position="260"/>
    </location>
</feature>
<feature type="strand" evidence="13">
    <location>
        <begin position="262"/>
        <end position="264"/>
    </location>
</feature>
<feature type="turn" evidence="13">
    <location>
        <begin position="266"/>
        <end position="268"/>
    </location>
</feature>
<feature type="helix" evidence="13">
    <location>
        <begin position="269"/>
        <end position="272"/>
    </location>
</feature>
<feature type="strand" evidence="13">
    <location>
        <begin position="277"/>
        <end position="279"/>
    </location>
</feature>
<feature type="strand" evidence="13">
    <location>
        <begin position="282"/>
        <end position="285"/>
    </location>
</feature>
<feature type="strand" evidence="13">
    <location>
        <begin position="288"/>
        <end position="290"/>
    </location>
</feature>
<feature type="turn" evidence="13">
    <location>
        <begin position="292"/>
        <end position="294"/>
    </location>
</feature>
<dbReference type="EC" id="3.1.1.-" evidence="6 7 8"/>
<dbReference type="EMBL" id="AAYY01000002">
    <property type="protein sequence ID" value="EDP44992.1"/>
    <property type="molecule type" value="Genomic_DNA"/>
</dbReference>
<dbReference type="RefSeq" id="XP_001732206.1">
    <property type="nucleotide sequence ID" value="XM_001732154.1"/>
</dbReference>
<dbReference type="PDB" id="5GW8">
    <property type="method" value="X-ray"/>
    <property type="resolution" value="2.00 A"/>
    <property type="chains" value="A/B=19-304"/>
</dbReference>
<dbReference type="PDBsum" id="5GW8"/>
<dbReference type="SMR" id="A8PUY5"/>
<dbReference type="ESTHER" id="malgo-a8puy5">
    <property type="family name" value="Lipase_3"/>
</dbReference>
<dbReference type="GeneID" id="5856512"/>
<dbReference type="KEGG" id="mgl:MGL_0799"/>
<dbReference type="VEuPathDB" id="FungiDB:MGL_0799"/>
<dbReference type="InParanoid" id="A8PUY5"/>
<dbReference type="OMA" id="HNIQAIP"/>
<dbReference type="OrthoDB" id="426718at2759"/>
<dbReference type="BRENDA" id="3.1.1.79">
    <property type="organism ID" value="13511"/>
</dbReference>
<dbReference type="Proteomes" id="UP000008837">
    <property type="component" value="Unassembled WGS sequence"/>
</dbReference>
<dbReference type="GO" id="GO:0005576">
    <property type="term" value="C:extracellular region"/>
    <property type="evidence" value="ECO:0007669"/>
    <property type="project" value="UniProtKB-SubCell"/>
</dbReference>
<dbReference type="GO" id="GO:0016787">
    <property type="term" value="F:hydrolase activity"/>
    <property type="evidence" value="ECO:0007669"/>
    <property type="project" value="UniProtKB-KW"/>
</dbReference>
<dbReference type="GO" id="GO:0046872">
    <property type="term" value="F:metal ion binding"/>
    <property type="evidence" value="ECO:0007669"/>
    <property type="project" value="UniProtKB-KW"/>
</dbReference>
<dbReference type="GO" id="GO:0016042">
    <property type="term" value="P:lipid catabolic process"/>
    <property type="evidence" value="ECO:0007669"/>
    <property type="project" value="UniProtKB-KW"/>
</dbReference>
<dbReference type="CDD" id="cd00519">
    <property type="entry name" value="Lipase_3"/>
    <property type="match status" value="1"/>
</dbReference>
<dbReference type="Gene3D" id="3.40.50.1820">
    <property type="entry name" value="alpha/beta hydrolase"/>
    <property type="match status" value="1"/>
</dbReference>
<dbReference type="InterPro" id="IPR029058">
    <property type="entry name" value="AB_hydrolase_fold"/>
</dbReference>
<dbReference type="InterPro" id="IPR002921">
    <property type="entry name" value="Fungal_lipase-type"/>
</dbReference>
<dbReference type="InterPro" id="IPR051218">
    <property type="entry name" value="Sec_MonoDiacylglyc_Lipase"/>
</dbReference>
<dbReference type="PANTHER" id="PTHR45856">
    <property type="entry name" value="ALPHA/BETA-HYDROLASES SUPERFAMILY PROTEIN"/>
    <property type="match status" value="1"/>
</dbReference>
<dbReference type="PANTHER" id="PTHR45856:SF24">
    <property type="entry name" value="FUNGAL LIPASE-LIKE DOMAIN-CONTAINING PROTEIN"/>
    <property type="match status" value="1"/>
</dbReference>
<dbReference type="Pfam" id="PF01764">
    <property type="entry name" value="Lipase_3"/>
    <property type="match status" value="1"/>
</dbReference>
<dbReference type="SUPFAM" id="SSF53474">
    <property type="entry name" value="alpha/beta-Hydrolases"/>
    <property type="match status" value="1"/>
</dbReference>
<dbReference type="PROSITE" id="PS00120">
    <property type="entry name" value="LIPASE_SER"/>
    <property type="match status" value="1"/>
</dbReference>
<proteinExistence type="evidence at protein level"/>
<protein>
    <recommendedName>
        <fullName evidence="9">Secreted mono- and diacylglycerol lipase MDL2</fullName>
        <ecNumber evidence="6 7 8">3.1.1.-</ecNumber>
    </recommendedName>
</protein>